<sequence>MDVFKQSEVWFVIGSQNLYGPKTLQQVMDNAHQVVNSLNSEAGLPVKLVLKPLVTTPDEITALCREANYDTACIGIMTWLHTFSPAKMWIGGLSILNKPLLQFHTQFNAQIPWETMDMDFMNLNQTAHGGREFGFIGARMRQQHSVITGHWQDKEAHQRIGQWMRVAAAKQESQQLKVARFGDNMREVAVTEGDKVAAQIQFGYSVNAYGIGDLVAVVDAVSKGDIDTLVEEYEATYRFTDAVKLNGDKRENLLDAARIELGMTRFLEQGGFKAFTTNFENLYGLKQLPGLAVQRLMQQGYGFGGEGDWKTAALLRILKVMGTGLKGGTSFMEDYTYNFQPGNDLVVGSHMLEVCPSIAKEEKPLLDVQHLGIGGKADPARLIFSTPAGPALNASLIDMGNRFRLLVNVVDTVEQPHPLPKLPVARAIWQAQPSLATAAEAWIIAGGAHHTVFSQAVGVDELRLYAEMHGIEFLLIDNDTTLPAFKNEIRWNEVYYQLNR</sequence>
<reference key="1">
    <citation type="submission" date="2008-04" db="EMBL/GenBank/DDBJ databases">
        <title>Complete sequence of Yersinia pseudotuberculosis PB1/+.</title>
        <authorList>
            <person name="Copeland A."/>
            <person name="Lucas S."/>
            <person name="Lapidus A."/>
            <person name="Glavina del Rio T."/>
            <person name="Dalin E."/>
            <person name="Tice H."/>
            <person name="Bruce D."/>
            <person name="Goodwin L."/>
            <person name="Pitluck S."/>
            <person name="Munk A.C."/>
            <person name="Brettin T."/>
            <person name="Detter J.C."/>
            <person name="Han C."/>
            <person name="Tapia R."/>
            <person name="Schmutz J."/>
            <person name="Larimer F."/>
            <person name="Land M."/>
            <person name="Hauser L."/>
            <person name="Challacombe J.F."/>
            <person name="Green L."/>
            <person name="Lindler L.E."/>
            <person name="Nikolich M.P."/>
            <person name="Richardson P."/>
        </authorList>
    </citation>
    <scope>NUCLEOTIDE SEQUENCE [LARGE SCALE GENOMIC DNA]</scope>
    <source>
        <strain>PB1/+</strain>
    </source>
</reference>
<proteinExistence type="inferred from homology"/>
<organism>
    <name type="scientific">Yersinia pseudotuberculosis serotype IB (strain PB1/+)</name>
    <dbReference type="NCBI Taxonomy" id="502801"/>
    <lineage>
        <taxon>Bacteria</taxon>
        <taxon>Pseudomonadati</taxon>
        <taxon>Pseudomonadota</taxon>
        <taxon>Gammaproteobacteria</taxon>
        <taxon>Enterobacterales</taxon>
        <taxon>Yersiniaceae</taxon>
        <taxon>Yersinia</taxon>
    </lineage>
</organism>
<gene>
    <name evidence="1" type="primary">araA</name>
    <name type="ordered locus">YPTS_2242</name>
</gene>
<dbReference type="EC" id="5.3.1.4" evidence="1"/>
<dbReference type="EMBL" id="CP001048">
    <property type="protein sequence ID" value="ACC89203.1"/>
    <property type="molecule type" value="Genomic_DNA"/>
</dbReference>
<dbReference type="RefSeq" id="WP_011192463.1">
    <property type="nucleotide sequence ID" value="NZ_CP009780.1"/>
</dbReference>
<dbReference type="SMR" id="B2K4K7"/>
<dbReference type="GeneID" id="49785832"/>
<dbReference type="KEGG" id="ypb:YPTS_2242"/>
<dbReference type="PATRIC" id="fig|502801.10.peg.1636"/>
<dbReference type="UniPathway" id="UPA00145">
    <property type="reaction ID" value="UER00565"/>
</dbReference>
<dbReference type="GO" id="GO:0005829">
    <property type="term" value="C:cytosol"/>
    <property type="evidence" value="ECO:0007669"/>
    <property type="project" value="TreeGrafter"/>
</dbReference>
<dbReference type="GO" id="GO:0008733">
    <property type="term" value="F:L-arabinose isomerase activity"/>
    <property type="evidence" value="ECO:0007669"/>
    <property type="project" value="UniProtKB-UniRule"/>
</dbReference>
<dbReference type="GO" id="GO:0030145">
    <property type="term" value="F:manganese ion binding"/>
    <property type="evidence" value="ECO:0007669"/>
    <property type="project" value="UniProtKB-UniRule"/>
</dbReference>
<dbReference type="GO" id="GO:0019569">
    <property type="term" value="P:L-arabinose catabolic process to xylulose 5-phosphate"/>
    <property type="evidence" value="ECO:0007669"/>
    <property type="project" value="UniProtKB-UniRule"/>
</dbReference>
<dbReference type="CDD" id="cd03557">
    <property type="entry name" value="L-arabinose_isomerase"/>
    <property type="match status" value="1"/>
</dbReference>
<dbReference type="FunFam" id="3.40.50.10940:FF:000001">
    <property type="entry name" value="L-arabinose isomerase"/>
    <property type="match status" value="1"/>
</dbReference>
<dbReference type="Gene3D" id="3.40.50.10940">
    <property type="match status" value="1"/>
</dbReference>
<dbReference type="HAMAP" id="MF_00519">
    <property type="entry name" value="Arabinose_Isome"/>
    <property type="match status" value="1"/>
</dbReference>
<dbReference type="InterPro" id="IPR024664">
    <property type="entry name" value="Ara_Isoase_C"/>
</dbReference>
<dbReference type="InterPro" id="IPR055390">
    <property type="entry name" value="AraA_central"/>
</dbReference>
<dbReference type="InterPro" id="IPR055389">
    <property type="entry name" value="AraA_N"/>
</dbReference>
<dbReference type="InterPro" id="IPR038583">
    <property type="entry name" value="AraA_N_sf"/>
</dbReference>
<dbReference type="InterPro" id="IPR004216">
    <property type="entry name" value="Fuc/Ara_isomerase_C"/>
</dbReference>
<dbReference type="InterPro" id="IPR009015">
    <property type="entry name" value="Fucose_isomerase_N/cen_sf"/>
</dbReference>
<dbReference type="InterPro" id="IPR003762">
    <property type="entry name" value="Lara_isomerase"/>
</dbReference>
<dbReference type="NCBIfam" id="NF002795">
    <property type="entry name" value="PRK02929.1"/>
    <property type="match status" value="1"/>
</dbReference>
<dbReference type="PANTHER" id="PTHR38464">
    <property type="entry name" value="L-ARABINOSE ISOMERASE"/>
    <property type="match status" value="1"/>
</dbReference>
<dbReference type="PANTHER" id="PTHR38464:SF1">
    <property type="entry name" value="L-ARABINOSE ISOMERASE"/>
    <property type="match status" value="1"/>
</dbReference>
<dbReference type="Pfam" id="PF24856">
    <property type="entry name" value="AraA_central"/>
    <property type="match status" value="1"/>
</dbReference>
<dbReference type="Pfam" id="PF02610">
    <property type="entry name" value="AraA_N"/>
    <property type="match status" value="1"/>
</dbReference>
<dbReference type="Pfam" id="PF11762">
    <property type="entry name" value="Arabinose_Iso_C"/>
    <property type="match status" value="1"/>
</dbReference>
<dbReference type="PIRSF" id="PIRSF001478">
    <property type="entry name" value="L-ara_isomerase"/>
    <property type="match status" value="1"/>
</dbReference>
<dbReference type="SUPFAM" id="SSF50443">
    <property type="entry name" value="FucI/AraA C-terminal domain-like"/>
    <property type="match status" value="1"/>
</dbReference>
<dbReference type="SUPFAM" id="SSF53743">
    <property type="entry name" value="FucI/AraA N-terminal and middle domains"/>
    <property type="match status" value="1"/>
</dbReference>
<comment type="function">
    <text evidence="1">Catalyzes the conversion of L-arabinose to L-ribulose.</text>
</comment>
<comment type="catalytic activity">
    <reaction evidence="1">
        <text>beta-L-arabinopyranose = L-ribulose</text>
        <dbReference type="Rhea" id="RHEA:14821"/>
        <dbReference type="ChEBI" id="CHEBI:16880"/>
        <dbReference type="ChEBI" id="CHEBI:40886"/>
        <dbReference type="EC" id="5.3.1.4"/>
    </reaction>
</comment>
<comment type="cofactor">
    <cofactor evidence="1">
        <name>Mn(2+)</name>
        <dbReference type="ChEBI" id="CHEBI:29035"/>
    </cofactor>
    <text evidence="1">Binds 1 Mn(2+) ion per subunit.</text>
</comment>
<comment type="pathway">
    <text evidence="1">Carbohydrate degradation; L-arabinose degradation via L-ribulose; D-xylulose 5-phosphate from L-arabinose (bacterial route): step 1/3.</text>
</comment>
<comment type="subunit">
    <text evidence="1">Homohexamer.</text>
</comment>
<comment type="similarity">
    <text evidence="1">Belongs to the arabinose isomerase family.</text>
</comment>
<feature type="chain" id="PRO_1000127622" description="L-arabinose isomerase">
    <location>
        <begin position="1"/>
        <end position="500"/>
    </location>
</feature>
<feature type="binding site" evidence="1">
    <location>
        <position position="306"/>
    </location>
    <ligand>
        <name>Mn(2+)</name>
        <dbReference type="ChEBI" id="CHEBI:29035"/>
    </ligand>
</feature>
<feature type="binding site" evidence="1">
    <location>
        <position position="333"/>
    </location>
    <ligand>
        <name>Mn(2+)</name>
        <dbReference type="ChEBI" id="CHEBI:29035"/>
    </ligand>
</feature>
<feature type="binding site" evidence="1">
    <location>
        <position position="350"/>
    </location>
    <ligand>
        <name>Mn(2+)</name>
        <dbReference type="ChEBI" id="CHEBI:29035"/>
    </ligand>
</feature>
<feature type="binding site" evidence="1">
    <location>
        <position position="450"/>
    </location>
    <ligand>
        <name>Mn(2+)</name>
        <dbReference type="ChEBI" id="CHEBI:29035"/>
    </ligand>
</feature>
<evidence type="ECO:0000255" key="1">
    <source>
        <dbReference type="HAMAP-Rule" id="MF_00519"/>
    </source>
</evidence>
<name>ARAA_YERPB</name>
<protein>
    <recommendedName>
        <fullName evidence="1">L-arabinose isomerase</fullName>
        <ecNumber evidence="1">5.3.1.4</ecNumber>
    </recommendedName>
</protein>
<keyword id="KW-0054">Arabinose catabolism</keyword>
<keyword id="KW-0119">Carbohydrate metabolism</keyword>
<keyword id="KW-0413">Isomerase</keyword>
<keyword id="KW-0464">Manganese</keyword>
<keyword id="KW-0479">Metal-binding</keyword>
<accession>B2K4K7</accession>